<comment type="function">
    <text evidence="3 4">May be involved in ABA-induced senescence responses.</text>
</comment>
<comment type="subcellular location">
    <subcellularLocation>
        <location evidence="6">Cell membrane</location>
        <topology evidence="6">Single-pass type I membrane protein</topology>
    </subcellularLocation>
</comment>
<comment type="disruption phenotype">
    <text evidence="3 4">Enhanced sensitivity to abscisic acid (ABA) (PubMed:18434605). RNAi mutants also display enhanced sensitivity to abscisic acid (ABA) (PubMed:19704533).</text>
</comment>
<comment type="similarity">
    <text evidence="6">Belongs to the RLP family.</text>
</comment>
<protein>
    <recommendedName>
        <fullName evidence="5">Receptor-like protein 41</fullName>
        <shortName evidence="5">AtRLP41</shortName>
    </recommendedName>
</protein>
<evidence type="ECO:0000255" key="1"/>
<evidence type="ECO:0000255" key="2">
    <source>
        <dbReference type="PROSITE-ProRule" id="PRU00498"/>
    </source>
</evidence>
<evidence type="ECO:0000269" key="3">
    <source>
    </source>
</evidence>
<evidence type="ECO:0000269" key="4">
    <source>
    </source>
</evidence>
<evidence type="ECO:0000303" key="5">
    <source>
    </source>
</evidence>
<evidence type="ECO:0000305" key="6"/>
<evidence type="ECO:0000312" key="7">
    <source>
        <dbReference type="Araport" id="AT3G25010"/>
    </source>
</evidence>
<evidence type="ECO:0000312" key="8">
    <source>
        <dbReference type="EMBL" id="BAB01885.1"/>
    </source>
</evidence>
<keyword id="KW-1003">Cell membrane</keyword>
<keyword id="KW-0325">Glycoprotein</keyword>
<keyword id="KW-0433">Leucine-rich repeat</keyword>
<keyword id="KW-0472">Membrane</keyword>
<keyword id="KW-0675">Receptor</keyword>
<keyword id="KW-1185">Reference proteome</keyword>
<keyword id="KW-0677">Repeat</keyword>
<keyword id="KW-0732">Signal</keyword>
<keyword id="KW-0812">Transmembrane</keyword>
<keyword id="KW-1133">Transmembrane helix</keyword>
<proteinExistence type="inferred from homology"/>
<reference key="1">
    <citation type="journal article" date="2000" name="DNA Res.">
        <title>Structural analysis of Arabidopsis thaliana chromosome 3. II. Sequence features of the 4,251,695 bp regions covered by 90 P1, TAC and BAC clones.</title>
        <authorList>
            <person name="Kaneko T."/>
            <person name="Katoh T."/>
            <person name="Sato S."/>
            <person name="Nakamura Y."/>
            <person name="Asamizu E."/>
            <person name="Tabata S."/>
        </authorList>
    </citation>
    <scope>NUCLEOTIDE SEQUENCE [LARGE SCALE GENOMIC DNA]</scope>
    <source>
        <strain>cv. Columbia</strain>
    </source>
</reference>
<reference key="2">
    <citation type="journal article" date="2017" name="Plant J.">
        <title>Araport11: a complete reannotation of the Arabidopsis thaliana reference genome.</title>
        <authorList>
            <person name="Cheng C.Y."/>
            <person name="Krishnakumar V."/>
            <person name="Chan A.P."/>
            <person name="Thibaud-Nissen F."/>
            <person name="Schobel S."/>
            <person name="Town C.D."/>
        </authorList>
    </citation>
    <scope>GENOME REANNOTATION</scope>
    <source>
        <strain>cv. Columbia</strain>
    </source>
</reference>
<reference key="3">
    <citation type="journal article" date="2005" name="Plant Physiol.">
        <title>Phylogenomic analysis of the receptor-like proteins of rice and Arabidopsis.</title>
        <authorList>
            <person name="Fritz-Laylin L.K."/>
            <person name="Krishnamurthy N."/>
            <person name="Toer M."/>
            <person name="Sjoelander K.V."/>
            <person name="Jones J.D."/>
        </authorList>
    </citation>
    <scope>GENE FAMILY</scope>
</reference>
<reference key="4">
    <citation type="journal article" date="2008" name="Plant Physiol.">
        <title>A genome-wide functional investigation into the roles of receptor-like proteins in Arabidopsis.</title>
        <authorList>
            <person name="Wang G."/>
            <person name="Ellendorff U."/>
            <person name="Kemp B."/>
            <person name="Mansfield J.W."/>
            <person name="Forsyth A."/>
            <person name="Mitchell K."/>
            <person name="Bastas K."/>
            <person name="Liu C.-M."/>
            <person name="Woods-Toer A."/>
            <person name="Zipfel C."/>
            <person name="de Wit P.J.G.M."/>
            <person name="Jones J.D.G."/>
            <person name="Toer M."/>
            <person name="Thomma B.P.H.J."/>
        </authorList>
    </citation>
    <scope>FUNCTION</scope>
    <scope>DISRUPTION PHENOTYPE</scope>
    <scope>GENE FAMILY</scope>
    <scope>NOMENCLATURE</scope>
    <source>
        <strain>cv. Columbia</strain>
    </source>
</reference>
<reference key="5">
    <citation type="journal article" date="2008" name="Plant Signal. Behav.">
        <title>Gene silencing to investigate the roles of receptor-like proteins in Arabidopsis.</title>
        <authorList>
            <person name="Ellendorff U."/>
            <person name="Zhang Z."/>
            <person name="Thomma B.P."/>
        </authorList>
    </citation>
    <scope>FUNCTION</scope>
    <scope>DISRUPTION PHENOTYPE</scope>
</reference>
<accession>Q9LJS2</accession>
<sequence>MSELLLRLNFLLLLLLSCVSPSSFVTFNNPVVGLGACGPHQIQAFTQFKNEFNTRACNHSSPWNGVWCDNSTGAVTKIQFMACLSGTLKSNSSLFQFHELRSLLLIHNNFTSSSISSKFGMLNKLEVLFLSSSGFLGQVPFSFSNLSMLSALDLSDNELTGSLSFVRNLRKLRVLDVSYNHFSGILNPNSSLFELHHLTYLSLGSNSFTSSTLPYEFGNLNKLELLDVSSNSFFGQVPPTISNLTQLTELYLPLNDFTGSLPLVQNLTKLSILALFGNHFSGTIPSSLFTMPFLSYLSLKGNNLNGSIEVPNSSSSSRLESLYLGKNHFEGKILKPISKLINLKELDLSFLSTSYPIDLSLFSSFKSLLVLDLTGDWISQAGLSSDSYISLTLEALYMKQCNISDFPNILKSLPNLECIDVSNNRVSGKIPEWLWSLPRLSSVFIGDNLLTGFEGSSEILVNSSVQILVLDSNSLEGALPHLPLSIIYFSARYNRFKGDIPLSICNRSSLDVLDLRYNNFTGPIPPCLSNLLFLNLRKNNLEGSIPDTYFADAPLRSLDVGYNRLTGKLPRSLLNCSALQFLSVDHNGIEDTFPFYLKVLPKLQVLLLSSNKFYGPLSPPNQGSLGFPELRILEIAGNKLTGSLPQDFFVNWKASSLTMNEDQGLYMVYSKVVYGIYYLSYLATIDLQYKGLSMEQKWVLTSSATIDLSGNRLEGEIPESIGLLKALIALNLSNNAFTGHIPLSLANLVKIESLDLSSNQLSGTIPNGLGTLSFLAYVNVSHNQLNGEIPQGTQITGQPKSSFEGNAGLCGLPLQQRCFGTNAPPAHQFKEEEDEEQEQVLNWEGVAIGYGVGVLLGLAIAQLIASYKPEWLACLIKSRNR</sequence>
<dbReference type="EMBL" id="AP000412">
    <property type="protein sequence ID" value="BAB01885.1"/>
    <property type="molecule type" value="Genomic_DNA"/>
</dbReference>
<dbReference type="EMBL" id="CP002686">
    <property type="protein sequence ID" value="AEE76964.1"/>
    <property type="molecule type" value="Genomic_DNA"/>
</dbReference>
<dbReference type="RefSeq" id="NP_189137.1">
    <property type="nucleotide sequence ID" value="NM_113405.2"/>
</dbReference>
<dbReference type="SMR" id="Q9LJS2"/>
<dbReference type="FunCoup" id="Q9LJS2">
    <property type="interactions" value="4"/>
</dbReference>
<dbReference type="IntAct" id="Q9LJS2">
    <property type="interactions" value="1"/>
</dbReference>
<dbReference type="STRING" id="3702.Q9LJS2"/>
<dbReference type="GlyCosmos" id="Q9LJS2">
    <property type="glycosylation" value="17 sites, No reported glycans"/>
</dbReference>
<dbReference type="GlyGen" id="Q9LJS2">
    <property type="glycosylation" value="17 sites"/>
</dbReference>
<dbReference type="PaxDb" id="3702-AT3G25010.1"/>
<dbReference type="ProteomicsDB" id="228143"/>
<dbReference type="EnsemblPlants" id="AT3G25010.1">
    <property type="protein sequence ID" value="AT3G25010.1"/>
    <property type="gene ID" value="AT3G25010"/>
</dbReference>
<dbReference type="GeneID" id="822092"/>
<dbReference type="Gramene" id="AT3G25010.1">
    <property type="protein sequence ID" value="AT3G25010.1"/>
    <property type="gene ID" value="AT3G25010"/>
</dbReference>
<dbReference type="KEGG" id="ath:AT3G25010"/>
<dbReference type="Araport" id="AT3G25010"/>
<dbReference type="TAIR" id="AT3G25010">
    <property type="gene designation" value="RLP41"/>
</dbReference>
<dbReference type="HOGENOM" id="CLU_000288_18_3_1"/>
<dbReference type="InParanoid" id="Q9LJS2"/>
<dbReference type="PhylomeDB" id="Q9LJS2"/>
<dbReference type="PRO" id="PR:Q9LJS2"/>
<dbReference type="Proteomes" id="UP000006548">
    <property type="component" value="Chromosome 3"/>
</dbReference>
<dbReference type="ExpressionAtlas" id="Q9LJS2">
    <property type="expression patterns" value="baseline and differential"/>
</dbReference>
<dbReference type="GO" id="GO:0005886">
    <property type="term" value="C:plasma membrane"/>
    <property type="evidence" value="ECO:0007669"/>
    <property type="project" value="UniProtKB-SubCell"/>
</dbReference>
<dbReference type="GO" id="GO:0071215">
    <property type="term" value="P:cellular response to abscisic acid stimulus"/>
    <property type="evidence" value="ECO:0000315"/>
    <property type="project" value="UniProtKB"/>
</dbReference>
<dbReference type="GO" id="GO:0010150">
    <property type="term" value="P:leaf senescence"/>
    <property type="evidence" value="ECO:0000315"/>
    <property type="project" value="UniProtKB"/>
</dbReference>
<dbReference type="FunFam" id="3.80.10.10:FF:000111">
    <property type="entry name" value="LRR receptor-like serine/threonine-protein kinase ERECTA"/>
    <property type="match status" value="1"/>
</dbReference>
<dbReference type="FunFam" id="3.80.10.10:FF:000095">
    <property type="entry name" value="LRR receptor-like serine/threonine-protein kinase GSO1"/>
    <property type="match status" value="1"/>
</dbReference>
<dbReference type="FunFam" id="3.80.10.10:FF:000924">
    <property type="entry name" value="Receptor like protein 39"/>
    <property type="match status" value="1"/>
</dbReference>
<dbReference type="FunFam" id="3.80.10.10:FF:001628">
    <property type="entry name" value="Receptor like protein 41"/>
    <property type="match status" value="1"/>
</dbReference>
<dbReference type="FunFam" id="3.80.10.10:FF:001932">
    <property type="entry name" value="Receptor-like protein 41"/>
    <property type="match status" value="1"/>
</dbReference>
<dbReference type="Gene3D" id="3.80.10.10">
    <property type="entry name" value="Ribonuclease Inhibitor"/>
    <property type="match status" value="5"/>
</dbReference>
<dbReference type="InterPro" id="IPR001611">
    <property type="entry name" value="Leu-rich_rpt"/>
</dbReference>
<dbReference type="InterPro" id="IPR003591">
    <property type="entry name" value="Leu-rich_rpt_typical-subtyp"/>
</dbReference>
<dbReference type="InterPro" id="IPR032675">
    <property type="entry name" value="LRR_dom_sf"/>
</dbReference>
<dbReference type="InterPro" id="IPR055414">
    <property type="entry name" value="LRR_R13L4/SHOC2-like"/>
</dbReference>
<dbReference type="InterPro" id="IPR046956">
    <property type="entry name" value="RLP23-like"/>
</dbReference>
<dbReference type="PANTHER" id="PTHR48061">
    <property type="entry name" value="LEUCINE-RICH REPEAT RECEPTOR PROTEIN KINASE EMS1-LIKE-RELATED"/>
    <property type="match status" value="1"/>
</dbReference>
<dbReference type="PANTHER" id="PTHR48061:SF2">
    <property type="entry name" value="RECEPTOR LIKE PROTEIN 30-LIKE"/>
    <property type="match status" value="1"/>
</dbReference>
<dbReference type="Pfam" id="PF00560">
    <property type="entry name" value="LRR_1"/>
    <property type="match status" value="3"/>
</dbReference>
<dbReference type="Pfam" id="PF23598">
    <property type="entry name" value="LRR_14"/>
    <property type="match status" value="1"/>
</dbReference>
<dbReference type="Pfam" id="PF13855">
    <property type="entry name" value="LRR_8"/>
    <property type="match status" value="1"/>
</dbReference>
<dbReference type="PRINTS" id="PR00019">
    <property type="entry name" value="LEURICHRPT"/>
</dbReference>
<dbReference type="SMART" id="SM00369">
    <property type="entry name" value="LRR_TYP"/>
    <property type="match status" value="9"/>
</dbReference>
<dbReference type="SUPFAM" id="SSF52058">
    <property type="entry name" value="L domain-like"/>
    <property type="match status" value="3"/>
</dbReference>
<gene>
    <name evidence="5" type="primary">RLP41</name>
    <name evidence="7" type="ordered locus">At3g25010</name>
    <name evidence="8" type="ORF">K3G3.2</name>
</gene>
<name>RLP41_ARATH</name>
<organism>
    <name type="scientific">Arabidopsis thaliana</name>
    <name type="common">Mouse-ear cress</name>
    <dbReference type="NCBI Taxonomy" id="3702"/>
    <lineage>
        <taxon>Eukaryota</taxon>
        <taxon>Viridiplantae</taxon>
        <taxon>Streptophyta</taxon>
        <taxon>Embryophyta</taxon>
        <taxon>Tracheophyta</taxon>
        <taxon>Spermatophyta</taxon>
        <taxon>Magnoliopsida</taxon>
        <taxon>eudicotyledons</taxon>
        <taxon>Gunneridae</taxon>
        <taxon>Pentapetalae</taxon>
        <taxon>rosids</taxon>
        <taxon>malvids</taxon>
        <taxon>Brassicales</taxon>
        <taxon>Brassicaceae</taxon>
        <taxon>Camelineae</taxon>
        <taxon>Arabidopsis</taxon>
    </lineage>
</organism>
<feature type="signal peptide" evidence="1">
    <location>
        <begin position="1"/>
        <end position="21"/>
    </location>
</feature>
<feature type="chain" id="PRO_5014108210" description="Receptor-like protein 41">
    <location>
        <begin position="22"/>
        <end position="881"/>
    </location>
</feature>
<feature type="topological domain" description="Extracellular" evidence="1">
    <location>
        <begin position="22"/>
        <end position="844"/>
    </location>
</feature>
<feature type="transmembrane region" description="Helical" evidence="1">
    <location>
        <begin position="845"/>
        <end position="865"/>
    </location>
</feature>
<feature type="topological domain" description="Cytoplasmic" evidence="1">
    <location>
        <begin position="866"/>
        <end position="881"/>
    </location>
</feature>
<feature type="repeat" description="LRR 1" evidence="1">
    <location>
        <begin position="97"/>
        <end position="121"/>
    </location>
</feature>
<feature type="repeat" description="LRR 2" evidence="1">
    <location>
        <begin position="122"/>
        <end position="145"/>
    </location>
</feature>
<feature type="repeat" description="LRR 3" evidence="1">
    <location>
        <begin position="146"/>
        <end position="169"/>
    </location>
</feature>
<feature type="repeat" description="LRR 4" evidence="1">
    <location>
        <begin position="170"/>
        <end position="195"/>
    </location>
</feature>
<feature type="repeat" description="LRR 5" evidence="1">
    <location>
        <begin position="197"/>
        <end position="219"/>
    </location>
</feature>
<feature type="repeat" description="LRR 6" evidence="1">
    <location>
        <begin position="220"/>
        <end position="244"/>
    </location>
</feature>
<feature type="repeat" description="LRR 7" evidence="1">
    <location>
        <begin position="245"/>
        <end position="267"/>
    </location>
</feature>
<feature type="repeat" description="LRR 8" evidence="1">
    <location>
        <begin position="268"/>
        <end position="291"/>
    </location>
</feature>
<feature type="repeat" description="LRR 9" evidence="1">
    <location>
        <begin position="293"/>
        <end position="317"/>
    </location>
</feature>
<feature type="repeat" description="LRR 10" evidence="1">
    <location>
        <begin position="319"/>
        <end position="340"/>
    </location>
</feature>
<feature type="repeat" description="LRR 11" evidence="1">
    <location>
        <begin position="342"/>
        <end position="364"/>
    </location>
</feature>
<feature type="repeat" description="LRR 12" evidence="1">
    <location>
        <begin position="365"/>
        <end position="390"/>
    </location>
</feature>
<feature type="repeat" description="LRR 13" evidence="1">
    <location>
        <begin position="391"/>
        <end position="412"/>
    </location>
</feature>
<feature type="repeat" description="LRR 14" evidence="1">
    <location>
        <begin position="413"/>
        <end position="437"/>
    </location>
</feature>
<feature type="repeat" description="LRR 15" evidence="1">
    <location>
        <begin position="439"/>
        <end position="462"/>
    </location>
</feature>
<feature type="repeat" description="LRR 16" evidence="1">
    <location>
        <begin position="463"/>
        <end position="486"/>
    </location>
</feature>
<feature type="repeat" description="LRR 17; degenerate" evidence="6">
    <location>
        <begin position="487"/>
        <end position="506"/>
    </location>
</feature>
<feature type="repeat" description="LRR 18" evidence="1">
    <location>
        <begin position="507"/>
        <end position="528"/>
    </location>
</feature>
<feature type="repeat" description="LRR 19" evidence="1">
    <location>
        <begin position="529"/>
        <end position="552"/>
    </location>
</feature>
<feature type="repeat" description="LRR 20" evidence="1">
    <location>
        <begin position="554"/>
        <end position="576"/>
    </location>
</feature>
<feature type="repeat" description="LRR 21" evidence="1">
    <location>
        <begin position="578"/>
        <end position="599"/>
    </location>
</feature>
<feature type="repeat" description="LRR 22" evidence="1">
    <location>
        <begin position="600"/>
        <end position="624"/>
    </location>
</feature>
<feature type="repeat" description="LRR 23" evidence="1">
    <location>
        <begin position="627"/>
        <end position="651"/>
    </location>
</feature>
<feature type="repeat" description="LRR 24" evidence="1">
    <location>
        <begin position="701"/>
        <end position="724"/>
    </location>
</feature>
<feature type="repeat" description="LRR 25" evidence="1">
    <location>
        <begin position="725"/>
        <end position="748"/>
    </location>
</feature>
<feature type="repeat" description="LRR 26" evidence="1">
    <location>
        <begin position="749"/>
        <end position="772"/>
    </location>
</feature>
<feature type="repeat" description="LRR 27" evidence="1">
    <location>
        <begin position="774"/>
        <end position="797"/>
    </location>
</feature>
<feature type="glycosylation site" description="N-linked (GlcNAc...) asparagine" evidence="2">
    <location>
        <position position="58"/>
    </location>
</feature>
<feature type="glycosylation site" description="N-linked (GlcNAc...) asparagine" evidence="2">
    <location>
        <position position="70"/>
    </location>
</feature>
<feature type="glycosylation site" description="N-linked (GlcNAc...) asparagine" evidence="2">
    <location>
        <position position="91"/>
    </location>
</feature>
<feature type="glycosylation site" description="N-linked (GlcNAc...) asparagine" evidence="2">
    <location>
        <position position="109"/>
    </location>
</feature>
<feature type="glycosylation site" description="N-linked (GlcNAc...) asparagine" evidence="2">
    <location>
        <position position="145"/>
    </location>
</feature>
<feature type="glycosylation site" description="N-linked (GlcNAc...) asparagine" evidence="2">
    <location>
        <position position="189"/>
    </location>
</feature>
<feature type="glycosylation site" description="N-linked (GlcNAc...) asparagine" evidence="2">
    <location>
        <position position="243"/>
    </location>
</feature>
<feature type="glycosylation site" description="N-linked (GlcNAc...) asparagine" evidence="2">
    <location>
        <position position="266"/>
    </location>
</feature>
<feature type="glycosylation site" description="N-linked (GlcNAc...) asparagine" evidence="2">
    <location>
        <position position="305"/>
    </location>
</feature>
<feature type="glycosylation site" description="N-linked (GlcNAc...) asparagine" evidence="2">
    <location>
        <position position="312"/>
    </location>
</feature>
<feature type="glycosylation site" description="N-linked (GlcNAc...) asparagine" evidence="2">
    <location>
        <position position="402"/>
    </location>
</feature>
<feature type="glycosylation site" description="N-linked (GlcNAc...) asparagine" evidence="2">
    <location>
        <position position="462"/>
    </location>
</feature>
<feature type="glycosylation site" description="N-linked (GlcNAc...) asparagine" evidence="2">
    <location>
        <position position="506"/>
    </location>
</feature>
<feature type="glycosylation site" description="N-linked (GlcNAc...) asparagine" evidence="2">
    <location>
        <position position="519"/>
    </location>
</feature>
<feature type="glycosylation site" description="N-linked (GlcNAc...) asparagine" evidence="2">
    <location>
        <position position="575"/>
    </location>
</feature>
<feature type="glycosylation site" description="N-linked (GlcNAc...) asparagine" evidence="2">
    <location>
        <position position="731"/>
    </location>
</feature>
<feature type="glycosylation site" description="N-linked (GlcNAc...) asparagine" evidence="2">
    <location>
        <position position="779"/>
    </location>
</feature>